<evidence type="ECO:0000255" key="1">
    <source>
        <dbReference type="HAMAP-Rule" id="MF_00661"/>
    </source>
</evidence>
<evidence type="ECO:0000256" key="2">
    <source>
        <dbReference type="SAM" id="MobiDB-lite"/>
    </source>
</evidence>
<accession>Q12S35</accession>
<comment type="function">
    <text evidence="1">DEAD-box RNA helicase involved in RNA degradation. Has RNA-dependent ATPase activity and unwinds double-stranded RNA.</text>
</comment>
<comment type="catalytic activity">
    <reaction evidence="1">
        <text>ATP + H2O = ADP + phosphate + H(+)</text>
        <dbReference type="Rhea" id="RHEA:13065"/>
        <dbReference type="ChEBI" id="CHEBI:15377"/>
        <dbReference type="ChEBI" id="CHEBI:15378"/>
        <dbReference type="ChEBI" id="CHEBI:30616"/>
        <dbReference type="ChEBI" id="CHEBI:43474"/>
        <dbReference type="ChEBI" id="CHEBI:456216"/>
        <dbReference type="EC" id="3.6.4.13"/>
    </reaction>
</comment>
<comment type="subunit">
    <text evidence="1">Component of the RNA degradosome, which is a multiprotein complex involved in RNA processing and mRNA degradation.</text>
</comment>
<comment type="subcellular location">
    <subcellularLocation>
        <location evidence="1">Cytoplasm</location>
    </subcellularLocation>
</comment>
<comment type="similarity">
    <text evidence="1">Belongs to the DEAD box helicase family. RhlB subfamily.</text>
</comment>
<name>RHLB_SHEDO</name>
<sequence length="432" mass="48302">MSETHLSTQRFADLPLHAEVIQALNENGFEFCTPIQALSLPVLLKAKDIAGQAQTGTGKTMAFLVATFNHLLTTPAPQARELNQPRAIIMAPTRELAIQIAKDANLLAKHTGLKVGIVYGGESYEVQREVLDKGVDILIGTTGRIIDYVRQGVISLNSIQAVVLDEADRMFDLGFIKDIRFLFRRMPDASSRLNMLFSATLSMKVQELAYDHMNDPEKVEVTPEEKTSKNIKEEIFYPSTEDKMRLLLTLMEEDWPEKAIVFSNTKHSCENLWSWLEGDGHRVGLLTGDVPQKKRIRILEQFTSGDLDVLVATDVAARGLHISDVSHVYNYDLPDDCEDYVHRIGRTGRAGNKGVSVSFACETYALNLPAIEQYIGHSVPVSRYDREALLDDIPTPVKIHRKHPTSRTRDGAKGAHRSGGARPPRHRTRRPS</sequence>
<reference key="1">
    <citation type="submission" date="2006-03" db="EMBL/GenBank/DDBJ databases">
        <title>Complete sequence of Shewanella denitrificans OS217.</title>
        <authorList>
            <consortium name="US DOE Joint Genome Institute"/>
            <person name="Copeland A."/>
            <person name="Lucas S."/>
            <person name="Lapidus A."/>
            <person name="Barry K."/>
            <person name="Detter J.C."/>
            <person name="Glavina del Rio T."/>
            <person name="Hammon N."/>
            <person name="Israni S."/>
            <person name="Dalin E."/>
            <person name="Tice H."/>
            <person name="Pitluck S."/>
            <person name="Brettin T."/>
            <person name="Bruce D."/>
            <person name="Han C."/>
            <person name="Tapia R."/>
            <person name="Gilna P."/>
            <person name="Kiss H."/>
            <person name="Schmutz J."/>
            <person name="Larimer F."/>
            <person name="Land M."/>
            <person name="Hauser L."/>
            <person name="Kyrpides N."/>
            <person name="Lykidis A."/>
            <person name="Richardson P."/>
        </authorList>
    </citation>
    <scope>NUCLEOTIDE SEQUENCE [LARGE SCALE GENOMIC DNA]</scope>
    <source>
        <strain>OS217 / ATCC BAA-1090 / DSM 15013</strain>
    </source>
</reference>
<organism>
    <name type="scientific">Shewanella denitrificans (strain OS217 / ATCC BAA-1090 / DSM 15013)</name>
    <dbReference type="NCBI Taxonomy" id="318161"/>
    <lineage>
        <taxon>Bacteria</taxon>
        <taxon>Pseudomonadati</taxon>
        <taxon>Pseudomonadota</taxon>
        <taxon>Gammaproteobacteria</taxon>
        <taxon>Alteromonadales</taxon>
        <taxon>Shewanellaceae</taxon>
        <taxon>Shewanella</taxon>
    </lineage>
</organism>
<protein>
    <recommendedName>
        <fullName evidence="1">ATP-dependent RNA helicase RhlB</fullName>
        <ecNumber evidence="1">3.6.4.13</ecNumber>
    </recommendedName>
</protein>
<gene>
    <name evidence="1" type="primary">rhlB</name>
    <name type="ordered locus">Sden_0449</name>
</gene>
<keyword id="KW-0067">ATP-binding</keyword>
<keyword id="KW-0963">Cytoplasm</keyword>
<keyword id="KW-0347">Helicase</keyword>
<keyword id="KW-0378">Hydrolase</keyword>
<keyword id="KW-0547">Nucleotide-binding</keyword>
<keyword id="KW-1185">Reference proteome</keyword>
<keyword id="KW-0694">RNA-binding</keyword>
<dbReference type="EC" id="3.6.4.13" evidence="1"/>
<dbReference type="EMBL" id="CP000302">
    <property type="protein sequence ID" value="ABE53741.1"/>
    <property type="molecule type" value="Genomic_DNA"/>
</dbReference>
<dbReference type="RefSeq" id="WP_011494907.1">
    <property type="nucleotide sequence ID" value="NC_007954.1"/>
</dbReference>
<dbReference type="SMR" id="Q12S35"/>
<dbReference type="STRING" id="318161.Sden_0449"/>
<dbReference type="KEGG" id="sdn:Sden_0449"/>
<dbReference type="eggNOG" id="COG0513">
    <property type="taxonomic scope" value="Bacteria"/>
</dbReference>
<dbReference type="HOGENOM" id="CLU_003041_28_3_6"/>
<dbReference type="OrthoDB" id="9805696at2"/>
<dbReference type="Proteomes" id="UP000001982">
    <property type="component" value="Chromosome"/>
</dbReference>
<dbReference type="GO" id="GO:0005829">
    <property type="term" value="C:cytosol"/>
    <property type="evidence" value="ECO:0007669"/>
    <property type="project" value="TreeGrafter"/>
</dbReference>
<dbReference type="GO" id="GO:0005524">
    <property type="term" value="F:ATP binding"/>
    <property type="evidence" value="ECO:0007669"/>
    <property type="project" value="UniProtKB-UniRule"/>
</dbReference>
<dbReference type="GO" id="GO:0016887">
    <property type="term" value="F:ATP hydrolysis activity"/>
    <property type="evidence" value="ECO:0007669"/>
    <property type="project" value="RHEA"/>
</dbReference>
<dbReference type="GO" id="GO:0003723">
    <property type="term" value="F:RNA binding"/>
    <property type="evidence" value="ECO:0007669"/>
    <property type="project" value="UniProtKB-UniRule"/>
</dbReference>
<dbReference type="GO" id="GO:0003724">
    <property type="term" value="F:RNA helicase activity"/>
    <property type="evidence" value="ECO:0007669"/>
    <property type="project" value="UniProtKB-UniRule"/>
</dbReference>
<dbReference type="GO" id="GO:0006401">
    <property type="term" value="P:RNA catabolic process"/>
    <property type="evidence" value="ECO:0007669"/>
    <property type="project" value="UniProtKB-UniRule"/>
</dbReference>
<dbReference type="CDD" id="cd00268">
    <property type="entry name" value="DEADc"/>
    <property type="match status" value="1"/>
</dbReference>
<dbReference type="CDD" id="cd18787">
    <property type="entry name" value="SF2_C_DEAD"/>
    <property type="match status" value="1"/>
</dbReference>
<dbReference type="FunFam" id="3.40.50.300:FF:000312">
    <property type="entry name" value="ATP-dependent RNA helicase RhlB"/>
    <property type="match status" value="1"/>
</dbReference>
<dbReference type="Gene3D" id="3.40.50.300">
    <property type="entry name" value="P-loop containing nucleotide triphosphate hydrolases"/>
    <property type="match status" value="2"/>
</dbReference>
<dbReference type="HAMAP" id="MF_00661">
    <property type="entry name" value="DEAD_helicase_RhlB"/>
    <property type="match status" value="1"/>
</dbReference>
<dbReference type="InterPro" id="IPR011545">
    <property type="entry name" value="DEAD/DEAH_box_helicase_dom"/>
</dbReference>
<dbReference type="InterPro" id="IPR050079">
    <property type="entry name" value="DEAD_box_RNA_helicase"/>
</dbReference>
<dbReference type="InterPro" id="IPR014001">
    <property type="entry name" value="Helicase_ATP-bd"/>
</dbReference>
<dbReference type="InterPro" id="IPR001650">
    <property type="entry name" value="Helicase_C-like"/>
</dbReference>
<dbReference type="InterPro" id="IPR027417">
    <property type="entry name" value="P-loop_NTPase"/>
</dbReference>
<dbReference type="InterPro" id="IPR000629">
    <property type="entry name" value="RNA-helicase_DEAD-box_CS"/>
</dbReference>
<dbReference type="InterPro" id="IPR023554">
    <property type="entry name" value="RNA_helicase_ATP-dep_RhlB"/>
</dbReference>
<dbReference type="InterPro" id="IPR014014">
    <property type="entry name" value="RNA_helicase_DEAD_Q_motif"/>
</dbReference>
<dbReference type="NCBIfam" id="NF003419">
    <property type="entry name" value="PRK04837.1"/>
    <property type="match status" value="1"/>
</dbReference>
<dbReference type="PANTHER" id="PTHR47959:SF10">
    <property type="entry name" value="ATP-DEPENDENT RNA HELICASE RHLB"/>
    <property type="match status" value="1"/>
</dbReference>
<dbReference type="PANTHER" id="PTHR47959">
    <property type="entry name" value="ATP-DEPENDENT RNA HELICASE RHLE-RELATED"/>
    <property type="match status" value="1"/>
</dbReference>
<dbReference type="Pfam" id="PF00270">
    <property type="entry name" value="DEAD"/>
    <property type="match status" value="1"/>
</dbReference>
<dbReference type="Pfam" id="PF00271">
    <property type="entry name" value="Helicase_C"/>
    <property type="match status" value="1"/>
</dbReference>
<dbReference type="SMART" id="SM00487">
    <property type="entry name" value="DEXDc"/>
    <property type="match status" value="1"/>
</dbReference>
<dbReference type="SMART" id="SM00490">
    <property type="entry name" value="HELICc"/>
    <property type="match status" value="1"/>
</dbReference>
<dbReference type="SUPFAM" id="SSF52540">
    <property type="entry name" value="P-loop containing nucleoside triphosphate hydrolases"/>
    <property type="match status" value="1"/>
</dbReference>
<dbReference type="PROSITE" id="PS00039">
    <property type="entry name" value="DEAD_ATP_HELICASE"/>
    <property type="match status" value="1"/>
</dbReference>
<dbReference type="PROSITE" id="PS51192">
    <property type="entry name" value="HELICASE_ATP_BIND_1"/>
    <property type="match status" value="1"/>
</dbReference>
<dbReference type="PROSITE" id="PS51194">
    <property type="entry name" value="HELICASE_CTER"/>
    <property type="match status" value="1"/>
</dbReference>
<dbReference type="PROSITE" id="PS51195">
    <property type="entry name" value="Q_MOTIF"/>
    <property type="match status" value="1"/>
</dbReference>
<proteinExistence type="inferred from homology"/>
<feature type="chain" id="PRO_1000082860" description="ATP-dependent RNA helicase RhlB">
    <location>
        <begin position="1"/>
        <end position="432"/>
    </location>
</feature>
<feature type="domain" description="Helicase ATP-binding" evidence="1">
    <location>
        <begin position="40"/>
        <end position="219"/>
    </location>
</feature>
<feature type="domain" description="Helicase C-terminal" evidence="1">
    <location>
        <begin position="243"/>
        <end position="390"/>
    </location>
</feature>
<feature type="region of interest" description="Disordered" evidence="2">
    <location>
        <begin position="395"/>
        <end position="432"/>
    </location>
</feature>
<feature type="short sequence motif" description="Q motif">
    <location>
        <begin position="9"/>
        <end position="37"/>
    </location>
</feature>
<feature type="short sequence motif" description="DEAD box">
    <location>
        <begin position="165"/>
        <end position="168"/>
    </location>
</feature>
<feature type="compositionally biased region" description="Basic residues" evidence="2">
    <location>
        <begin position="423"/>
        <end position="432"/>
    </location>
</feature>
<feature type="binding site" evidence="1">
    <location>
        <begin position="53"/>
        <end position="60"/>
    </location>
    <ligand>
        <name>ATP</name>
        <dbReference type="ChEBI" id="CHEBI:30616"/>
    </ligand>
</feature>